<dbReference type="EC" id="7.-.-.-" evidence="1"/>
<dbReference type="EMBL" id="BA000003">
    <property type="protein sequence ID" value="BAB12831.1"/>
    <property type="molecule type" value="Genomic_DNA"/>
</dbReference>
<dbReference type="RefSeq" id="NP_239945.1">
    <property type="nucleotide sequence ID" value="NC_002528.1"/>
</dbReference>
<dbReference type="SMR" id="P57213"/>
<dbReference type="STRING" id="563178.BUAP5A_111"/>
<dbReference type="EnsemblBacteria" id="BAB12831">
    <property type="protein sequence ID" value="BAB12831"/>
    <property type="gene ID" value="BAB12831"/>
</dbReference>
<dbReference type="KEGG" id="buc:BU113"/>
<dbReference type="PATRIC" id="fig|107806.10.peg.120"/>
<dbReference type="eggNOG" id="COG4657">
    <property type="taxonomic scope" value="Bacteria"/>
</dbReference>
<dbReference type="HOGENOM" id="CLU_095255_1_0_6"/>
<dbReference type="Proteomes" id="UP000001806">
    <property type="component" value="Chromosome"/>
</dbReference>
<dbReference type="GO" id="GO:0005886">
    <property type="term" value="C:plasma membrane"/>
    <property type="evidence" value="ECO:0007669"/>
    <property type="project" value="UniProtKB-SubCell"/>
</dbReference>
<dbReference type="GO" id="GO:0022900">
    <property type="term" value="P:electron transport chain"/>
    <property type="evidence" value="ECO:0007669"/>
    <property type="project" value="UniProtKB-UniRule"/>
</dbReference>
<dbReference type="HAMAP" id="MF_00459">
    <property type="entry name" value="RsxA_RnfA"/>
    <property type="match status" value="1"/>
</dbReference>
<dbReference type="InterPro" id="IPR011293">
    <property type="entry name" value="Ion_transpt_RnfA/RsxA"/>
</dbReference>
<dbReference type="InterPro" id="IPR003667">
    <property type="entry name" value="NqrDE/RnfAE"/>
</dbReference>
<dbReference type="InterPro" id="IPR050133">
    <property type="entry name" value="NqrDE/RnfAE_oxidrdctase"/>
</dbReference>
<dbReference type="NCBIfam" id="NF003481">
    <property type="entry name" value="PRK05151.1"/>
    <property type="match status" value="1"/>
</dbReference>
<dbReference type="NCBIfam" id="TIGR01943">
    <property type="entry name" value="rnfA"/>
    <property type="match status" value="1"/>
</dbReference>
<dbReference type="PANTHER" id="PTHR30335">
    <property type="entry name" value="INTEGRAL MEMBRANE PROTEIN OF SOXR-REDUCING COMPLEX"/>
    <property type="match status" value="1"/>
</dbReference>
<dbReference type="PANTHER" id="PTHR30335:SF0">
    <property type="entry name" value="ION-TRANSLOCATING OXIDOREDUCTASE COMPLEX SUBUNIT A"/>
    <property type="match status" value="1"/>
</dbReference>
<dbReference type="Pfam" id="PF02508">
    <property type="entry name" value="Rnf-Nqr"/>
    <property type="match status" value="1"/>
</dbReference>
<dbReference type="PIRSF" id="PIRSF006102">
    <property type="entry name" value="NQR_DE"/>
    <property type="match status" value="1"/>
</dbReference>
<protein>
    <recommendedName>
        <fullName evidence="1">Ion-translocating oxidoreductase complex subunit A</fullName>
        <ecNumber evidence="1">7.-.-.-</ecNumber>
    </recommendedName>
    <alternativeName>
        <fullName evidence="1">Rnf electron transport complex subunit A</fullName>
    </alternativeName>
</protein>
<feature type="chain" id="PRO_0000214286" description="Ion-translocating oxidoreductase complex subunit A">
    <location>
        <begin position="1"/>
        <end position="193"/>
    </location>
</feature>
<feature type="transmembrane region" description="Helical" evidence="1">
    <location>
        <begin position="5"/>
        <end position="25"/>
    </location>
</feature>
<feature type="transmembrane region" description="Helical" evidence="1">
    <location>
        <begin position="47"/>
        <end position="67"/>
    </location>
</feature>
<feature type="transmembrane region" description="Helical" evidence="1">
    <location>
        <begin position="72"/>
        <end position="92"/>
    </location>
</feature>
<feature type="transmembrane region" description="Helical" evidence="1">
    <location>
        <begin position="102"/>
        <end position="122"/>
    </location>
</feature>
<feature type="transmembrane region" description="Helical" evidence="1">
    <location>
        <begin position="134"/>
        <end position="154"/>
    </location>
</feature>
<feature type="transmembrane region" description="Helical" evidence="1">
    <location>
        <begin position="167"/>
        <end position="187"/>
    </location>
</feature>
<keyword id="KW-0997">Cell inner membrane</keyword>
<keyword id="KW-1003">Cell membrane</keyword>
<keyword id="KW-0249">Electron transport</keyword>
<keyword id="KW-0472">Membrane</keyword>
<keyword id="KW-1185">Reference proteome</keyword>
<keyword id="KW-1278">Translocase</keyword>
<keyword id="KW-0812">Transmembrane</keyword>
<keyword id="KW-1133">Transmembrane helix</keyword>
<keyword id="KW-0813">Transport</keyword>
<name>RNFA_BUCAI</name>
<gene>
    <name evidence="1" type="primary">rnfA</name>
    <name type="ordered locus">BU113</name>
</gene>
<proteinExistence type="inferred from homology"/>
<reference key="1">
    <citation type="journal article" date="2000" name="Nature">
        <title>Genome sequence of the endocellular bacterial symbiont of aphids Buchnera sp. APS.</title>
        <authorList>
            <person name="Shigenobu S."/>
            <person name="Watanabe H."/>
            <person name="Hattori M."/>
            <person name="Sakaki Y."/>
            <person name="Ishikawa H."/>
        </authorList>
    </citation>
    <scope>NUCLEOTIDE SEQUENCE [LARGE SCALE GENOMIC DNA]</scope>
    <source>
        <strain>APS</strain>
    </source>
</reference>
<evidence type="ECO:0000255" key="1">
    <source>
        <dbReference type="HAMAP-Rule" id="MF_00459"/>
    </source>
</evidence>
<comment type="function">
    <text evidence="1">Part of a membrane-bound complex that couples electron transfer with translocation of ions across the membrane.</text>
</comment>
<comment type="subunit">
    <text evidence="1">The complex is composed of six subunits: RnfA, RnfB, RnfC, RnfD, RnfE and RnfG.</text>
</comment>
<comment type="subcellular location">
    <subcellularLocation>
        <location evidence="1">Cell inner membrane</location>
        <topology evidence="1">Multi-pass membrane protein</topology>
    </subcellularLocation>
</comment>
<comment type="similarity">
    <text evidence="1">Belongs to the NqrDE/RnfAE family.</text>
</comment>
<accession>P57213</accession>
<organism>
    <name type="scientific">Buchnera aphidicola subsp. Acyrthosiphon pisum (strain APS)</name>
    <name type="common">Acyrthosiphon pisum symbiotic bacterium</name>
    <dbReference type="NCBI Taxonomy" id="107806"/>
    <lineage>
        <taxon>Bacteria</taxon>
        <taxon>Pseudomonadati</taxon>
        <taxon>Pseudomonadota</taxon>
        <taxon>Gammaproteobacteria</taxon>
        <taxon>Enterobacterales</taxon>
        <taxon>Erwiniaceae</taxon>
        <taxon>Buchnera</taxon>
    </lineage>
</organism>
<sequence>MKHYILFFISNILIENFILVKFLGLCPFLGASSNIETAFGMSCATTFVILTSSVLLWCVNFFILLPLDLIYLRIIAYMLIVSVSVQFLEIVLRKTSPILYRLLGIFLPLITTNCTVLAIPLFSLYEHHTFLESIFYGLSASLGFALVMIIFSCIRERIVLSDIPLPFQGAPIILITVSLISITFMGFKGLIKI</sequence>